<name>RSMA_SYNC1</name>
<dbReference type="EC" id="2.1.1.182" evidence="1"/>
<dbReference type="EMBL" id="CP000142">
    <property type="protein sequence ID" value="ABA89089.1"/>
    <property type="molecule type" value="Genomic_DNA"/>
</dbReference>
<dbReference type="RefSeq" id="WP_011341591.1">
    <property type="nucleotide sequence ID" value="NC_007498.2"/>
</dbReference>
<dbReference type="SMR" id="Q3A3G8"/>
<dbReference type="STRING" id="338963.Pcar_1848"/>
<dbReference type="KEGG" id="pca:Pcar_1848"/>
<dbReference type="eggNOG" id="COG0030">
    <property type="taxonomic scope" value="Bacteria"/>
</dbReference>
<dbReference type="HOGENOM" id="CLU_041220_0_1_7"/>
<dbReference type="OrthoDB" id="9814755at2"/>
<dbReference type="Proteomes" id="UP000002534">
    <property type="component" value="Chromosome"/>
</dbReference>
<dbReference type="GO" id="GO:0005829">
    <property type="term" value="C:cytosol"/>
    <property type="evidence" value="ECO:0007669"/>
    <property type="project" value="TreeGrafter"/>
</dbReference>
<dbReference type="GO" id="GO:0052908">
    <property type="term" value="F:16S rRNA (adenine(1518)-N(6)/adenine(1519)-N(6))-dimethyltransferase activity"/>
    <property type="evidence" value="ECO:0007669"/>
    <property type="project" value="UniProtKB-EC"/>
</dbReference>
<dbReference type="GO" id="GO:0003723">
    <property type="term" value="F:RNA binding"/>
    <property type="evidence" value="ECO:0007669"/>
    <property type="project" value="UniProtKB-KW"/>
</dbReference>
<dbReference type="FunFam" id="1.10.8.100:FF:000001">
    <property type="entry name" value="Ribosomal RNA small subunit methyltransferase A"/>
    <property type="match status" value="1"/>
</dbReference>
<dbReference type="Gene3D" id="1.10.8.100">
    <property type="entry name" value="Ribosomal RNA adenine dimethylase-like, domain 2"/>
    <property type="match status" value="1"/>
</dbReference>
<dbReference type="Gene3D" id="3.40.50.150">
    <property type="entry name" value="Vaccinia Virus protein VP39"/>
    <property type="match status" value="1"/>
</dbReference>
<dbReference type="HAMAP" id="MF_00607">
    <property type="entry name" value="16SrRNA_methyltr_A"/>
    <property type="match status" value="1"/>
</dbReference>
<dbReference type="InterPro" id="IPR001737">
    <property type="entry name" value="KsgA/Erm"/>
</dbReference>
<dbReference type="InterPro" id="IPR023165">
    <property type="entry name" value="rRNA_Ade_diMease-like_C"/>
</dbReference>
<dbReference type="InterPro" id="IPR020596">
    <property type="entry name" value="rRNA_Ade_Mease_Trfase_CS"/>
</dbReference>
<dbReference type="InterPro" id="IPR020598">
    <property type="entry name" value="rRNA_Ade_methylase_Trfase_N"/>
</dbReference>
<dbReference type="InterPro" id="IPR011530">
    <property type="entry name" value="rRNA_adenine_dimethylase"/>
</dbReference>
<dbReference type="InterPro" id="IPR029063">
    <property type="entry name" value="SAM-dependent_MTases_sf"/>
</dbReference>
<dbReference type="NCBIfam" id="TIGR00755">
    <property type="entry name" value="ksgA"/>
    <property type="match status" value="1"/>
</dbReference>
<dbReference type="PANTHER" id="PTHR11727">
    <property type="entry name" value="DIMETHYLADENOSINE TRANSFERASE"/>
    <property type="match status" value="1"/>
</dbReference>
<dbReference type="PANTHER" id="PTHR11727:SF7">
    <property type="entry name" value="DIMETHYLADENOSINE TRANSFERASE-RELATED"/>
    <property type="match status" value="1"/>
</dbReference>
<dbReference type="Pfam" id="PF00398">
    <property type="entry name" value="RrnaAD"/>
    <property type="match status" value="1"/>
</dbReference>
<dbReference type="SMART" id="SM00650">
    <property type="entry name" value="rADc"/>
    <property type="match status" value="1"/>
</dbReference>
<dbReference type="SUPFAM" id="SSF53335">
    <property type="entry name" value="S-adenosyl-L-methionine-dependent methyltransferases"/>
    <property type="match status" value="1"/>
</dbReference>
<dbReference type="PROSITE" id="PS01131">
    <property type="entry name" value="RRNA_A_DIMETH"/>
    <property type="match status" value="1"/>
</dbReference>
<dbReference type="PROSITE" id="PS51689">
    <property type="entry name" value="SAM_RNA_A_N6_MT"/>
    <property type="match status" value="1"/>
</dbReference>
<gene>
    <name evidence="1" type="primary">rsmA</name>
    <name evidence="1" type="synonym">ksgA</name>
    <name type="ordered locus">Pcar_1848</name>
</gene>
<accession>Q3A3G8</accession>
<evidence type="ECO:0000255" key="1">
    <source>
        <dbReference type="HAMAP-Rule" id="MF_00607"/>
    </source>
</evidence>
<sequence>MNHRPKKRFGQNFLQDRQVVDGIFAAADLQPEDRVLEIGPGLGALTDRLLPEVARLHVIEIDRDLGAGLQARDEDKLVVHLGDALKLDWTALLTDPPYKLIANLPYNISSQIVFKILDHRHLFSRLVLMFQQEVGERLCAGPGSKNYGILSVLCQVWFDIRRVLRVPPGAFYPPPKVHSAVLCFDALAQPRIVVEDQQFFRRVVKAAFAQRRKTLRNSLTGAGLGFDGLEVSLLDAGIDPGRRAETLSLEEFGKLAQLIQPHFV</sequence>
<keyword id="KW-0963">Cytoplasm</keyword>
<keyword id="KW-0489">Methyltransferase</keyword>
<keyword id="KW-1185">Reference proteome</keyword>
<keyword id="KW-0694">RNA-binding</keyword>
<keyword id="KW-0698">rRNA processing</keyword>
<keyword id="KW-0949">S-adenosyl-L-methionine</keyword>
<keyword id="KW-0808">Transferase</keyword>
<protein>
    <recommendedName>
        <fullName evidence="1">Ribosomal RNA small subunit methyltransferase A</fullName>
        <ecNumber evidence="1">2.1.1.182</ecNumber>
    </recommendedName>
    <alternativeName>
        <fullName evidence="1">16S rRNA (adenine(1518)-N(6)/adenine(1519)-N(6))-dimethyltransferase</fullName>
    </alternativeName>
    <alternativeName>
        <fullName evidence="1">16S rRNA dimethyladenosine transferase</fullName>
    </alternativeName>
    <alternativeName>
        <fullName evidence="1">16S rRNA dimethylase</fullName>
    </alternativeName>
    <alternativeName>
        <fullName evidence="1">S-adenosylmethionine-6-N', N'-adenosyl(rRNA) dimethyltransferase</fullName>
    </alternativeName>
</protein>
<feature type="chain" id="PRO_0000257315" description="Ribosomal RNA small subunit methyltransferase A">
    <location>
        <begin position="1"/>
        <end position="264"/>
    </location>
</feature>
<feature type="binding site" evidence="1">
    <location>
        <position position="12"/>
    </location>
    <ligand>
        <name>S-adenosyl-L-methionine</name>
        <dbReference type="ChEBI" id="CHEBI:59789"/>
    </ligand>
</feature>
<feature type="binding site" evidence="1">
    <location>
        <position position="14"/>
    </location>
    <ligand>
        <name>S-adenosyl-L-methionine</name>
        <dbReference type="ChEBI" id="CHEBI:59789"/>
    </ligand>
</feature>
<feature type="binding site" evidence="1">
    <location>
        <position position="39"/>
    </location>
    <ligand>
        <name>S-adenosyl-L-methionine</name>
        <dbReference type="ChEBI" id="CHEBI:59789"/>
    </ligand>
</feature>
<feature type="binding site" evidence="1">
    <location>
        <position position="60"/>
    </location>
    <ligand>
        <name>S-adenosyl-L-methionine</name>
        <dbReference type="ChEBI" id="CHEBI:59789"/>
    </ligand>
</feature>
<feature type="binding site" evidence="1">
    <location>
        <position position="83"/>
    </location>
    <ligand>
        <name>S-adenosyl-L-methionine</name>
        <dbReference type="ChEBI" id="CHEBI:59789"/>
    </ligand>
</feature>
<feature type="binding site" evidence="1">
    <location>
        <position position="103"/>
    </location>
    <ligand>
        <name>S-adenosyl-L-methionine</name>
        <dbReference type="ChEBI" id="CHEBI:59789"/>
    </ligand>
</feature>
<reference key="1">
    <citation type="submission" date="2005-10" db="EMBL/GenBank/DDBJ databases">
        <title>Complete sequence of Pelobacter carbinolicus DSM 2380.</title>
        <authorList>
            <person name="Copeland A."/>
            <person name="Lucas S."/>
            <person name="Lapidus A."/>
            <person name="Barry K."/>
            <person name="Detter J.C."/>
            <person name="Glavina T."/>
            <person name="Hammon N."/>
            <person name="Israni S."/>
            <person name="Pitluck S."/>
            <person name="Chertkov O."/>
            <person name="Schmutz J."/>
            <person name="Larimer F."/>
            <person name="Land M."/>
            <person name="Kyrpides N."/>
            <person name="Ivanova N."/>
            <person name="Richardson P."/>
        </authorList>
    </citation>
    <scope>NUCLEOTIDE SEQUENCE [LARGE SCALE GENOMIC DNA]</scope>
    <source>
        <strain>DSM 2380 / NBRC 103641 / GraBd1</strain>
    </source>
</reference>
<proteinExistence type="inferred from homology"/>
<organism>
    <name type="scientific">Syntrophotalea carbinolica (strain DSM 2380 / NBRC 103641 / GraBd1)</name>
    <name type="common">Pelobacter carbinolicus</name>
    <dbReference type="NCBI Taxonomy" id="338963"/>
    <lineage>
        <taxon>Bacteria</taxon>
        <taxon>Pseudomonadati</taxon>
        <taxon>Thermodesulfobacteriota</taxon>
        <taxon>Desulfuromonadia</taxon>
        <taxon>Desulfuromonadales</taxon>
        <taxon>Syntrophotaleaceae</taxon>
        <taxon>Syntrophotalea</taxon>
    </lineage>
</organism>
<comment type="function">
    <text evidence="1">Specifically dimethylates two adjacent adenosines (A1518 and A1519) in the loop of a conserved hairpin near the 3'-end of 16S rRNA in the 30S particle. May play a critical role in biogenesis of 30S subunits.</text>
</comment>
<comment type="catalytic activity">
    <reaction evidence="1">
        <text>adenosine(1518)/adenosine(1519) in 16S rRNA + 4 S-adenosyl-L-methionine = N(6)-dimethyladenosine(1518)/N(6)-dimethyladenosine(1519) in 16S rRNA + 4 S-adenosyl-L-homocysteine + 4 H(+)</text>
        <dbReference type="Rhea" id="RHEA:19609"/>
        <dbReference type="Rhea" id="RHEA-COMP:10232"/>
        <dbReference type="Rhea" id="RHEA-COMP:10233"/>
        <dbReference type="ChEBI" id="CHEBI:15378"/>
        <dbReference type="ChEBI" id="CHEBI:57856"/>
        <dbReference type="ChEBI" id="CHEBI:59789"/>
        <dbReference type="ChEBI" id="CHEBI:74411"/>
        <dbReference type="ChEBI" id="CHEBI:74493"/>
        <dbReference type="EC" id="2.1.1.182"/>
    </reaction>
</comment>
<comment type="subcellular location">
    <subcellularLocation>
        <location evidence="1">Cytoplasm</location>
    </subcellularLocation>
</comment>
<comment type="similarity">
    <text evidence="1">Belongs to the class I-like SAM-binding methyltransferase superfamily. rRNA adenine N(6)-methyltransferase family. RsmA subfamily.</text>
</comment>